<keyword id="KW-0249">Electron transport</keyword>
<keyword id="KW-0349">Heme</keyword>
<keyword id="KW-0408">Iron</keyword>
<keyword id="KW-0472">Membrane</keyword>
<keyword id="KW-0479">Metal-binding</keyword>
<keyword id="KW-0496">Mitochondrion</keyword>
<keyword id="KW-0999">Mitochondrion inner membrane</keyword>
<keyword id="KW-0679">Respiratory chain</keyword>
<keyword id="KW-0812">Transmembrane</keyword>
<keyword id="KW-1133">Transmembrane helix</keyword>
<keyword id="KW-0813">Transport</keyword>
<keyword id="KW-0830">Ubiquinone</keyword>
<gene>
    <name type="primary">MT-CYB</name>
    <name type="synonym">COB</name>
    <name type="synonym">CYTB</name>
    <name type="synonym">MTCYB</name>
</gene>
<name>CYB_TADBR</name>
<sequence length="176" mass="19757">MTNIRKSHPLIKIINDAFIDLPAPSNISSWWNFGSLLGVCLAVQILTGLFLAMHYTSDTATAFNSVTHICRDVNYGWLLRYLHANGASMFFICLYLHVGRGLYYGSYTYTETWNVGIILLFAVMATAFMGYVLPWGQMSFWGATVITNLLFAIPYIGTDLVEWIWGGFSVDKATLT</sequence>
<evidence type="ECO:0000250" key="1"/>
<evidence type="ECO:0000250" key="2">
    <source>
        <dbReference type="UniProtKB" id="P00157"/>
    </source>
</evidence>
<evidence type="ECO:0000255" key="3">
    <source>
        <dbReference type="PROSITE-ProRule" id="PRU00968"/>
    </source>
</evidence>
<geneLocation type="mitochondrion"/>
<organism>
    <name type="scientific">Tadarida brasiliensis</name>
    <name type="common">Brazilian free-tailed bat</name>
    <dbReference type="NCBI Taxonomy" id="9438"/>
    <lineage>
        <taxon>Eukaryota</taxon>
        <taxon>Metazoa</taxon>
        <taxon>Chordata</taxon>
        <taxon>Craniata</taxon>
        <taxon>Vertebrata</taxon>
        <taxon>Euteleostomi</taxon>
        <taxon>Mammalia</taxon>
        <taxon>Eutheria</taxon>
        <taxon>Laurasiatheria</taxon>
        <taxon>Chiroptera</taxon>
        <taxon>Yangochiroptera</taxon>
        <taxon>Molossidae</taxon>
        <taxon>Tadarida</taxon>
    </lineage>
</organism>
<proteinExistence type="inferred from homology"/>
<protein>
    <recommendedName>
        <fullName>Cytochrome b</fullName>
    </recommendedName>
    <alternativeName>
        <fullName>Complex III subunit 3</fullName>
    </alternativeName>
    <alternativeName>
        <fullName>Complex III subunit III</fullName>
    </alternativeName>
    <alternativeName>
        <fullName>Cytochrome b-c1 complex subunit 3</fullName>
    </alternativeName>
    <alternativeName>
        <fullName>Ubiquinol-cytochrome-c reductase complex cytochrome b subunit</fullName>
    </alternativeName>
</protein>
<feature type="chain" id="PRO_0000061634" description="Cytochrome b">
    <location>
        <begin position="1"/>
        <end position="176" status="greater than"/>
    </location>
</feature>
<feature type="transmembrane region" description="Helical" evidence="3">
    <location>
        <begin position="33"/>
        <end position="53"/>
    </location>
</feature>
<feature type="transmembrane region" description="Helical" evidence="2">
    <location>
        <begin position="77"/>
        <end position="98"/>
    </location>
</feature>
<feature type="transmembrane region" description="Helical" evidence="2">
    <location>
        <begin position="113"/>
        <end position="133"/>
    </location>
</feature>
<feature type="binding site" description="axial binding residue" evidence="2">
    <location>
        <position position="83"/>
    </location>
    <ligand>
        <name>heme b</name>
        <dbReference type="ChEBI" id="CHEBI:60344"/>
        <label>b562</label>
    </ligand>
    <ligandPart>
        <name>Fe</name>
        <dbReference type="ChEBI" id="CHEBI:18248"/>
    </ligandPart>
</feature>
<feature type="binding site" description="axial binding residue" evidence="2">
    <location>
        <position position="97"/>
    </location>
    <ligand>
        <name>heme b</name>
        <dbReference type="ChEBI" id="CHEBI:60344"/>
        <label>b566</label>
    </ligand>
    <ligandPart>
        <name>Fe</name>
        <dbReference type="ChEBI" id="CHEBI:18248"/>
    </ligandPart>
</feature>
<feature type="non-terminal residue">
    <location>
        <position position="176"/>
    </location>
</feature>
<comment type="function">
    <text evidence="2">Component of the ubiquinol-cytochrome c reductase complex (complex III or cytochrome b-c1 complex) that is part of the mitochondrial respiratory chain. The b-c1 complex mediates electron transfer from ubiquinol to cytochrome c. Contributes to the generation of a proton gradient across the mitochondrial membrane that is then used for ATP synthesis.</text>
</comment>
<comment type="cofactor">
    <cofactor evidence="2">
        <name>heme b</name>
        <dbReference type="ChEBI" id="CHEBI:60344"/>
    </cofactor>
    <text evidence="2">Binds 2 heme b groups non-covalently.</text>
</comment>
<comment type="subunit">
    <text evidence="2">The cytochrome bc1 complex contains 11 subunits: 3 respiratory subunits (MT-CYB, CYC1 and UQCRFS1), 2 core proteins (UQCRC1 and UQCRC2) and 6 low-molecular weight proteins (UQCRH/QCR6, UQCRB/QCR7, UQCRQ/QCR8, UQCR10/QCR9, UQCR11/QCR10 and a cleavage product of UQCRFS1). This cytochrome bc1 complex then forms a dimer.</text>
</comment>
<comment type="subcellular location">
    <subcellularLocation>
        <location evidence="2">Mitochondrion inner membrane</location>
        <topology evidence="2">Multi-pass membrane protein</topology>
    </subcellularLocation>
</comment>
<comment type="miscellaneous">
    <text evidence="1">Heme 1 (or BL or b562) is low-potential and absorbs at about 562 nm, and heme 2 (or BH or b566) is high-potential and absorbs at about 566 nm.</text>
</comment>
<comment type="similarity">
    <text evidence="3">Belongs to the cytochrome b family.</text>
</comment>
<comment type="caution">
    <text evidence="2">The full-length protein contains only eight transmembrane helices, not nine as predicted by bioinformatics tools.</text>
</comment>
<accession>Q35994</accession>
<reference key="1">
    <citation type="journal article" date="1994" name="J. Mammal.">
        <title>Familial affinity of Tomopeas ravus (Chiroptera) based on protein electrophoretic and cytochrome b sequence data.</title>
        <authorList>
            <person name="Sudman P.D."/>
            <person name="Barkley L.J."/>
            <person name="Hafner M.S."/>
        </authorList>
    </citation>
    <scope>NUCLEOTIDE SEQUENCE [GENOMIC DNA]</scope>
    <source>
        <strain>Isolate LSUMZ 23909</strain>
        <tissue>Kidney</tissue>
        <tissue>Liver</tissue>
    </source>
</reference>
<dbReference type="EMBL" id="L19734">
    <property type="protein sequence ID" value="AAA17779.1"/>
    <property type="molecule type" value="Genomic_DNA"/>
</dbReference>
<dbReference type="SMR" id="Q35994"/>
<dbReference type="GO" id="GO:0005743">
    <property type="term" value="C:mitochondrial inner membrane"/>
    <property type="evidence" value="ECO:0007669"/>
    <property type="project" value="UniProtKB-SubCell"/>
</dbReference>
<dbReference type="GO" id="GO:0046872">
    <property type="term" value="F:metal ion binding"/>
    <property type="evidence" value="ECO:0007669"/>
    <property type="project" value="UniProtKB-KW"/>
</dbReference>
<dbReference type="GO" id="GO:0008121">
    <property type="term" value="F:ubiquinol-cytochrome-c reductase activity"/>
    <property type="evidence" value="ECO:0007669"/>
    <property type="project" value="TreeGrafter"/>
</dbReference>
<dbReference type="GO" id="GO:0006122">
    <property type="term" value="P:mitochondrial electron transport, ubiquinol to cytochrome c"/>
    <property type="evidence" value="ECO:0007669"/>
    <property type="project" value="TreeGrafter"/>
</dbReference>
<dbReference type="CDD" id="cd00284">
    <property type="entry name" value="Cytochrome_b_N"/>
    <property type="match status" value="1"/>
</dbReference>
<dbReference type="Gene3D" id="1.20.810.10">
    <property type="entry name" value="Cytochrome Bc1 Complex, Chain C"/>
    <property type="match status" value="1"/>
</dbReference>
<dbReference type="InterPro" id="IPR005797">
    <property type="entry name" value="Cyt_b/b6_N"/>
</dbReference>
<dbReference type="InterPro" id="IPR027387">
    <property type="entry name" value="Cytb/b6-like_sf"/>
</dbReference>
<dbReference type="InterPro" id="IPR048259">
    <property type="entry name" value="Cytochrome_b_N_euk/bac"/>
</dbReference>
<dbReference type="InterPro" id="IPR016174">
    <property type="entry name" value="Di-haem_cyt_TM"/>
</dbReference>
<dbReference type="PANTHER" id="PTHR19271">
    <property type="entry name" value="CYTOCHROME B"/>
    <property type="match status" value="1"/>
</dbReference>
<dbReference type="PANTHER" id="PTHR19271:SF16">
    <property type="entry name" value="CYTOCHROME B"/>
    <property type="match status" value="1"/>
</dbReference>
<dbReference type="Pfam" id="PF00033">
    <property type="entry name" value="Cytochrome_B"/>
    <property type="match status" value="1"/>
</dbReference>
<dbReference type="SUPFAM" id="SSF81342">
    <property type="entry name" value="Transmembrane di-heme cytochromes"/>
    <property type="match status" value="1"/>
</dbReference>
<dbReference type="PROSITE" id="PS51002">
    <property type="entry name" value="CYTB_NTER"/>
    <property type="match status" value="1"/>
</dbReference>